<name>Y1215_STAHJ</name>
<accession>Q4L751</accession>
<evidence type="ECO:0000250" key="1"/>
<evidence type="ECO:0000305" key="2"/>
<comment type="subcellular location">
    <subcellularLocation>
        <location evidence="1">Cytoplasm</location>
    </subcellularLocation>
</comment>
<comment type="similarity">
    <text evidence="2">Belongs to the universal stress protein A family.</text>
</comment>
<organism>
    <name type="scientific">Staphylococcus haemolyticus (strain JCSC1435)</name>
    <dbReference type="NCBI Taxonomy" id="279808"/>
    <lineage>
        <taxon>Bacteria</taxon>
        <taxon>Bacillati</taxon>
        <taxon>Bacillota</taxon>
        <taxon>Bacilli</taxon>
        <taxon>Bacillales</taxon>
        <taxon>Staphylococcaceae</taxon>
        <taxon>Staphylococcus</taxon>
    </lineage>
</organism>
<feature type="chain" id="PRO_0000288900" description="Putative universal stress protein SH1215">
    <location>
        <begin position="1"/>
        <end position="165"/>
    </location>
</feature>
<keyword id="KW-0963">Cytoplasm</keyword>
<proteinExistence type="inferred from homology"/>
<gene>
    <name type="ordered locus">SH1215</name>
</gene>
<sequence length="165" mass="18380">MLTYKNILIAVDGSHEAEWAFNKAVDVAKRNDAKLTIVNIIDSRTYSSYEVYDAQFTEKSRSFSEELLKGYQEVATRAGVTNVETRLEFGSPKAIIPKKLASELGVDLIMCGTSGLNAVERFIVGSVSEAIVRHAPCDVLVVRTEEIPEDFQPEVATPEFRKQYS</sequence>
<reference key="1">
    <citation type="journal article" date="2005" name="J. Bacteriol.">
        <title>Whole-genome sequencing of Staphylococcus haemolyticus uncovers the extreme plasticity of its genome and the evolution of human-colonizing staphylococcal species.</title>
        <authorList>
            <person name="Takeuchi F."/>
            <person name="Watanabe S."/>
            <person name="Baba T."/>
            <person name="Yuzawa H."/>
            <person name="Ito T."/>
            <person name="Morimoto Y."/>
            <person name="Kuroda M."/>
            <person name="Cui L."/>
            <person name="Takahashi M."/>
            <person name="Ankai A."/>
            <person name="Baba S."/>
            <person name="Fukui S."/>
            <person name="Lee J.C."/>
            <person name="Hiramatsu K."/>
        </authorList>
    </citation>
    <scope>NUCLEOTIDE SEQUENCE [LARGE SCALE GENOMIC DNA]</scope>
    <source>
        <strain>JCSC1435</strain>
    </source>
</reference>
<dbReference type="EMBL" id="AP006716">
    <property type="protein sequence ID" value="BAE04524.1"/>
    <property type="molecule type" value="Genomic_DNA"/>
</dbReference>
<dbReference type="RefSeq" id="WP_011275514.1">
    <property type="nucleotide sequence ID" value="NC_007168.1"/>
</dbReference>
<dbReference type="SMR" id="Q4L751"/>
<dbReference type="KEGG" id="sha:SH1215"/>
<dbReference type="eggNOG" id="COG0589">
    <property type="taxonomic scope" value="Bacteria"/>
</dbReference>
<dbReference type="HOGENOM" id="CLU_049301_16_0_9"/>
<dbReference type="OrthoDB" id="9789668at2"/>
<dbReference type="Proteomes" id="UP000000543">
    <property type="component" value="Chromosome"/>
</dbReference>
<dbReference type="GO" id="GO:0005737">
    <property type="term" value="C:cytoplasm"/>
    <property type="evidence" value="ECO:0007669"/>
    <property type="project" value="UniProtKB-SubCell"/>
</dbReference>
<dbReference type="CDD" id="cd00293">
    <property type="entry name" value="USP-like"/>
    <property type="match status" value="1"/>
</dbReference>
<dbReference type="Gene3D" id="3.40.50.620">
    <property type="entry name" value="HUPs"/>
    <property type="match status" value="1"/>
</dbReference>
<dbReference type="InterPro" id="IPR014729">
    <property type="entry name" value="Rossmann-like_a/b/a_fold"/>
</dbReference>
<dbReference type="InterPro" id="IPR006015">
    <property type="entry name" value="Universal_stress_UspA"/>
</dbReference>
<dbReference type="InterPro" id="IPR006016">
    <property type="entry name" value="UspA"/>
</dbReference>
<dbReference type="PANTHER" id="PTHR46268">
    <property type="entry name" value="STRESS RESPONSE PROTEIN NHAX"/>
    <property type="match status" value="1"/>
</dbReference>
<dbReference type="PANTHER" id="PTHR46268:SF6">
    <property type="entry name" value="UNIVERSAL STRESS PROTEIN UP12"/>
    <property type="match status" value="1"/>
</dbReference>
<dbReference type="Pfam" id="PF00582">
    <property type="entry name" value="Usp"/>
    <property type="match status" value="1"/>
</dbReference>
<dbReference type="PIRSF" id="PIRSF006276">
    <property type="entry name" value="UspA"/>
    <property type="match status" value="1"/>
</dbReference>
<dbReference type="PRINTS" id="PR01438">
    <property type="entry name" value="UNVRSLSTRESS"/>
</dbReference>
<dbReference type="SUPFAM" id="SSF52402">
    <property type="entry name" value="Adenine nucleotide alpha hydrolases-like"/>
    <property type="match status" value="1"/>
</dbReference>
<protein>
    <recommendedName>
        <fullName>Putative universal stress protein SH1215</fullName>
    </recommendedName>
</protein>